<comment type="function">
    <text evidence="1">K(+)/H(+) antiporter that extrudes potassium in exchange for external protons and maintains the internal concentration of potassium under toxic levels.</text>
</comment>
<comment type="catalytic activity">
    <reaction evidence="1">
        <text>K(+)(in) + H(+)(out) = K(+)(out) + H(+)(in)</text>
        <dbReference type="Rhea" id="RHEA:29467"/>
        <dbReference type="ChEBI" id="CHEBI:15378"/>
        <dbReference type="ChEBI" id="CHEBI:29103"/>
    </reaction>
    <physiologicalReaction direction="left-to-right" evidence="1">
        <dbReference type="Rhea" id="RHEA:29468"/>
    </physiologicalReaction>
</comment>
<comment type="subcellular location">
    <subcellularLocation>
        <location evidence="1">Cell inner membrane</location>
        <topology evidence="1">Multi-pass membrane protein</topology>
    </subcellularLocation>
</comment>
<comment type="similarity">
    <text evidence="1">Belongs to the monovalent cation:proton antiporter 1 (CPA1) transporter (TC 2.A.36) family. NhaP2 subfamily.</text>
</comment>
<protein>
    <recommendedName>
        <fullName evidence="1">K(+)/H(+) antiporter NhaP2</fullName>
    </recommendedName>
    <alternativeName>
        <fullName evidence="1">Potassium/proton antiporter NhaP2</fullName>
    </alternativeName>
</protein>
<evidence type="ECO:0000255" key="1">
    <source>
        <dbReference type="HAMAP-Rule" id="MF_01075"/>
    </source>
</evidence>
<dbReference type="EMBL" id="CU928162">
    <property type="protein sequence ID" value="CAR07533.1"/>
    <property type="molecule type" value="Genomic_DNA"/>
</dbReference>
<dbReference type="RefSeq" id="WP_000340206.1">
    <property type="nucleotide sequence ID" value="NC_011745.1"/>
</dbReference>
<dbReference type="SMR" id="B7MTW9"/>
<dbReference type="KEGG" id="ecq:ECED1_1333"/>
<dbReference type="HOGENOM" id="CLU_005912_9_2_6"/>
<dbReference type="Proteomes" id="UP000000748">
    <property type="component" value="Chromosome"/>
</dbReference>
<dbReference type="GO" id="GO:0005886">
    <property type="term" value="C:plasma membrane"/>
    <property type="evidence" value="ECO:0007669"/>
    <property type="project" value="UniProtKB-SubCell"/>
</dbReference>
<dbReference type="GO" id="GO:0050660">
    <property type="term" value="F:flavin adenine dinucleotide binding"/>
    <property type="evidence" value="ECO:0007669"/>
    <property type="project" value="InterPro"/>
</dbReference>
<dbReference type="GO" id="GO:0015386">
    <property type="term" value="F:potassium:proton antiporter activity"/>
    <property type="evidence" value="ECO:0007669"/>
    <property type="project" value="UniProtKB-UniRule"/>
</dbReference>
<dbReference type="GO" id="GO:0006884">
    <property type="term" value="P:cell volume homeostasis"/>
    <property type="evidence" value="ECO:0007669"/>
    <property type="project" value="InterPro"/>
</dbReference>
<dbReference type="FunFam" id="1.20.1530.20:FF:000002">
    <property type="entry name" value="K(+)/H(+) antiporter NhaP2"/>
    <property type="match status" value="1"/>
</dbReference>
<dbReference type="FunFam" id="3.30.465.10:FF:000009">
    <property type="entry name" value="K(+)/H(+) antiporter NhaP2"/>
    <property type="match status" value="1"/>
</dbReference>
<dbReference type="FunFam" id="3.30.70.1450:FF:000007">
    <property type="entry name" value="K(+)/H(+) antiporter NhaP2"/>
    <property type="match status" value="1"/>
</dbReference>
<dbReference type="Gene3D" id="1.20.1530.20">
    <property type="match status" value="1"/>
</dbReference>
<dbReference type="Gene3D" id="3.30.465.10">
    <property type="match status" value="1"/>
</dbReference>
<dbReference type="Gene3D" id="3.30.70.1450">
    <property type="entry name" value="Regulator of K+ conductance, C-terminal domain"/>
    <property type="match status" value="1"/>
</dbReference>
<dbReference type="HAMAP" id="MF_01075">
    <property type="entry name" value="NhaP2"/>
    <property type="match status" value="1"/>
</dbReference>
<dbReference type="InterPro" id="IPR006153">
    <property type="entry name" value="Cation/H_exchanger_TM"/>
</dbReference>
<dbReference type="InterPro" id="IPR036318">
    <property type="entry name" value="FAD-bd_PCMH-like_sf"/>
</dbReference>
<dbReference type="InterPro" id="IPR016169">
    <property type="entry name" value="FAD-bd_PCMH_sub2"/>
</dbReference>
<dbReference type="InterPro" id="IPR038770">
    <property type="entry name" value="Na+/solute_symporter_sf"/>
</dbReference>
<dbReference type="InterPro" id="IPR023729">
    <property type="entry name" value="NhaP2"/>
</dbReference>
<dbReference type="InterPro" id="IPR006037">
    <property type="entry name" value="RCK_C"/>
</dbReference>
<dbReference type="InterPro" id="IPR036721">
    <property type="entry name" value="RCK_C_sf"/>
</dbReference>
<dbReference type="InterPro" id="IPR005170">
    <property type="entry name" value="Transptr-assoc_dom"/>
</dbReference>
<dbReference type="NCBIfam" id="NF003714">
    <property type="entry name" value="PRK05326.1-1"/>
    <property type="match status" value="1"/>
</dbReference>
<dbReference type="NCBIfam" id="NF003715">
    <property type="entry name" value="PRK05326.1-2"/>
    <property type="match status" value="1"/>
</dbReference>
<dbReference type="NCBIfam" id="NF003716">
    <property type="entry name" value="PRK05326.1-3"/>
    <property type="match status" value="1"/>
</dbReference>
<dbReference type="PANTHER" id="PTHR32507:SF7">
    <property type="entry name" value="K(+)_H(+) ANTIPORTER NHAP2"/>
    <property type="match status" value="1"/>
</dbReference>
<dbReference type="PANTHER" id="PTHR32507">
    <property type="entry name" value="NA(+)/H(+) ANTIPORTER 1"/>
    <property type="match status" value="1"/>
</dbReference>
<dbReference type="Pfam" id="PF03471">
    <property type="entry name" value="CorC_HlyC"/>
    <property type="match status" value="1"/>
</dbReference>
<dbReference type="Pfam" id="PF00999">
    <property type="entry name" value="Na_H_Exchanger"/>
    <property type="match status" value="1"/>
</dbReference>
<dbReference type="Pfam" id="PF02080">
    <property type="entry name" value="TrkA_C"/>
    <property type="match status" value="1"/>
</dbReference>
<dbReference type="SMART" id="SM01091">
    <property type="entry name" value="CorC_HlyC"/>
    <property type="match status" value="1"/>
</dbReference>
<dbReference type="SUPFAM" id="SSF56176">
    <property type="entry name" value="FAD-binding/transporter-associated domain-like"/>
    <property type="match status" value="1"/>
</dbReference>
<dbReference type="SUPFAM" id="SSF116726">
    <property type="entry name" value="TrkA C-terminal domain-like"/>
    <property type="match status" value="1"/>
</dbReference>
<dbReference type="PROSITE" id="PS51202">
    <property type="entry name" value="RCK_C"/>
    <property type="match status" value="1"/>
</dbReference>
<organism>
    <name type="scientific">Escherichia coli O81 (strain ED1a)</name>
    <dbReference type="NCBI Taxonomy" id="585397"/>
    <lineage>
        <taxon>Bacteria</taxon>
        <taxon>Pseudomonadati</taxon>
        <taxon>Pseudomonadota</taxon>
        <taxon>Gammaproteobacteria</taxon>
        <taxon>Enterobacterales</taxon>
        <taxon>Enterobacteriaceae</taxon>
        <taxon>Escherichia</taxon>
    </lineage>
</organism>
<keyword id="KW-0050">Antiport</keyword>
<keyword id="KW-0997">Cell inner membrane</keyword>
<keyword id="KW-1003">Cell membrane</keyword>
<keyword id="KW-0406">Ion transport</keyword>
<keyword id="KW-0472">Membrane</keyword>
<keyword id="KW-0630">Potassium</keyword>
<keyword id="KW-0633">Potassium transport</keyword>
<keyword id="KW-0812">Transmembrane</keyword>
<keyword id="KW-1133">Transmembrane helix</keyword>
<keyword id="KW-0813">Transport</keyword>
<name>NHAP2_ECO81</name>
<proteinExistence type="inferred from homology"/>
<gene>
    <name evidence="1" type="primary">nhaP2</name>
    <name type="synonym">cvrA</name>
    <name type="ordered locus">ECED1_1333</name>
</gene>
<sequence length="578" mass="62205">MDATTIISLFILGSILVTSSILLSSFSSRLGIPILVIFLAIGMLAGVDGVGGIPFDNYPFAYMVSNLALAIILLDGGMRTQASSFRVALGPALSLATLGVLITSGLTGMMAAWLFNLDLIEGLLIGAIVGSTDAAAVFSLLGGKGLNERVGSTLEIESGSNDPMAVFLTITLIAMIQQHESSVSWMFVVDILQQFGLGIVIGLGGGYLLLQMINRIALPAGLYPLLALSGGILIFALTTALEGSGILAVYLCGFLLGNRPIRNRYGILQNFDGLAWLAQIAMFLVLGLLVNPSDLLPIAIPALILSAWMIFFARPLSVFAGLLPFRGFNLRERVFISWVGLRGAVPIILAVFPMMAGLENARLFFNVAFFVVLVSLLLQGTSLSWAAKKAKVVVPPVGRPVSRVGLDIHPENPWEQFVYQLSADKWCVGAALRDLHMPKETRIAALFRDNQLLHPTGSTRLREGDVLCVIGRERDLPALGKLFSQSPPVALDQRFFGDFILEASAKYADVALIYGLEDGREYRDKQQTLGEIVQQLLGAAPVVGDQVEFAGMIWTVAEKEDNEVLKIGVRVAEEEAES</sequence>
<reference key="1">
    <citation type="journal article" date="2009" name="PLoS Genet.">
        <title>Organised genome dynamics in the Escherichia coli species results in highly diverse adaptive paths.</title>
        <authorList>
            <person name="Touchon M."/>
            <person name="Hoede C."/>
            <person name="Tenaillon O."/>
            <person name="Barbe V."/>
            <person name="Baeriswyl S."/>
            <person name="Bidet P."/>
            <person name="Bingen E."/>
            <person name="Bonacorsi S."/>
            <person name="Bouchier C."/>
            <person name="Bouvet O."/>
            <person name="Calteau A."/>
            <person name="Chiapello H."/>
            <person name="Clermont O."/>
            <person name="Cruveiller S."/>
            <person name="Danchin A."/>
            <person name="Diard M."/>
            <person name="Dossat C."/>
            <person name="Karoui M.E."/>
            <person name="Frapy E."/>
            <person name="Garry L."/>
            <person name="Ghigo J.M."/>
            <person name="Gilles A.M."/>
            <person name="Johnson J."/>
            <person name="Le Bouguenec C."/>
            <person name="Lescat M."/>
            <person name="Mangenot S."/>
            <person name="Martinez-Jehanne V."/>
            <person name="Matic I."/>
            <person name="Nassif X."/>
            <person name="Oztas S."/>
            <person name="Petit M.A."/>
            <person name="Pichon C."/>
            <person name="Rouy Z."/>
            <person name="Ruf C.S."/>
            <person name="Schneider D."/>
            <person name="Tourret J."/>
            <person name="Vacherie B."/>
            <person name="Vallenet D."/>
            <person name="Medigue C."/>
            <person name="Rocha E.P.C."/>
            <person name="Denamur E."/>
        </authorList>
    </citation>
    <scope>NUCLEOTIDE SEQUENCE [LARGE SCALE GENOMIC DNA]</scope>
    <source>
        <strain>ED1a</strain>
    </source>
</reference>
<accession>B7MTW9</accession>
<feature type="chain" id="PRO_1000149773" description="K(+)/H(+) antiporter NhaP2">
    <location>
        <begin position="1"/>
        <end position="578"/>
    </location>
</feature>
<feature type="transmembrane region" description="Helical" evidence="1">
    <location>
        <begin position="6"/>
        <end position="26"/>
    </location>
</feature>
<feature type="transmembrane region" description="Helical" evidence="1">
    <location>
        <begin position="30"/>
        <end position="50"/>
    </location>
</feature>
<feature type="transmembrane region" description="Helical" evidence="1">
    <location>
        <begin position="58"/>
        <end position="78"/>
    </location>
</feature>
<feature type="transmembrane region" description="Helical" evidence="1">
    <location>
        <begin position="87"/>
        <end position="107"/>
    </location>
</feature>
<feature type="transmembrane region" description="Helical" evidence="1">
    <location>
        <begin position="109"/>
        <end position="129"/>
    </location>
</feature>
<feature type="transmembrane region" description="Helical" evidence="1">
    <location>
        <begin position="156"/>
        <end position="176"/>
    </location>
</feature>
<feature type="transmembrane region" description="Helical" evidence="1">
    <location>
        <begin position="185"/>
        <end position="205"/>
    </location>
</feature>
<feature type="transmembrane region" description="Helical" evidence="1">
    <location>
        <begin position="216"/>
        <end position="236"/>
    </location>
</feature>
<feature type="transmembrane region" description="Helical" evidence="1">
    <location>
        <begin position="237"/>
        <end position="257"/>
    </location>
</feature>
<feature type="transmembrane region" description="Helical" evidence="1">
    <location>
        <begin position="270"/>
        <end position="290"/>
    </location>
</feature>
<feature type="transmembrane region" description="Helical" evidence="1">
    <location>
        <begin position="293"/>
        <end position="313"/>
    </location>
</feature>
<feature type="transmembrane region" description="Helical" evidence="1">
    <location>
        <begin position="334"/>
        <end position="354"/>
    </location>
</feature>
<feature type="transmembrane region" description="Helical" evidence="1">
    <location>
        <begin position="363"/>
        <end position="383"/>
    </location>
</feature>
<feature type="domain" description="RCK C-terminal" evidence="1">
    <location>
        <begin position="403"/>
        <end position="485"/>
    </location>
</feature>